<accession>Q6P806</accession>
<name>SAM50_XENTR</name>
<organism>
    <name type="scientific">Xenopus tropicalis</name>
    <name type="common">Western clawed frog</name>
    <name type="synonym">Silurana tropicalis</name>
    <dbReference type="NCBI Taxonomy" id="8364"/>
    <lineage>
        <taxon>Eukaryota</taxon>
        <taxon>Metazoa</taxon>
        <taxon>Chordata</taxon>
        <taxon>Craniata</taxon>
        <taxon>Vertebrata</taxon>
        <taxon>Euteleostomi</taxon>
        <taxon>Amphibia</taxon>
        <taxon>Batrachia</taxon>
        <taxon>Anura</taxon>
        <taxon>Pipoidea</taxon>
        <taxon>Pipidae</taxon>
        <taxon>Xenopodinae</taxon>
        <taxon>Xenopus</taxon>
        <taxon>Silurana</taxon>
    </lineage>
</organism>
<feature type="chain" id="PRO_0000383685" description="Sorting and assembly machinery component 50 homolog">
    <location>
        <begin position="1"/>
        <end position="468"/>
    </location>
</feature>
<feature type="domain" description="POTRA" evidence="3">
    <location>
        <begin position="44"/>
        <end position="124"/>
    </location>
</feature>
<feature type="region of interest" description="Disordered" evidence="4">
    <location>
        <begin position="1"/>
        <end position="24"/>
    </location>
</feature>
<protein>
    <recommendedName>
        <fullName>Sorting and assembly machinery component 50 homolog</fullName>
    </recommendedName>
</protein>
<gene>
    <name type="primary">samm50</name>
</gene>
<comment type="function">
    <text evidence="2">May play a role in the maintenance of the structure of mitochondrial cristae.</text>
</comment>
<comment type="subunit">
    <text evidence="2">Associates with the mitochondrial contact site and cristae organizing system (MICOS) complex (also known as MINOS or MitOS complex).</text>
</comment>
<comment type="subcellular location">
    <subcellularLocation>
        <location evidence="2">Mitochondrion outer membrane</location>
        <topology evidence="1">Multi-pass membrane protein</topology>
    </subcellularLocation>
</comment>
<comment type="domain">
    <text evidence="1">Its C-terminal part seems to contain many membrane-spanning sided beta-sheets, that have the potential to adopt a transmembrane beta-barrel type structure.</text>
</comment>
<comment type="similarity">
    <text evidence="5">Belongs to the SAM50/omp85 family.</text>
</comment>
<dbReference type="EMBL" id="BC061425">
    <property type="protein sequence ID" value="AAH61425.1"/>
    <property type="molecule type" value="mRNA"/>
</dbReference>
<dbReference type="RefSeq" id="NP_989138.1">
    <property type="nucleotide sequence ID" value="NM_203807.1"/>
</dbReference>
<dbReference type="SMR" id="Q6P806"/>
<dbReference type="FunCoup" id="Q6P806">
    <property type="interactions" value="2299"/>
</dbReference>
<dbReference type="DNASU" id="394743"/>
<dbReference type="GeneID" id="394743"/>
<dbReference type="KEGG" id="xtr:394743"/>
<dbReference type="AGR" id="Xenbase:XB-GENE-6456163"/>
<dbReference type="CTD" id="25813"/>
<dbReference type="Xenbase" id="XB-GENE-6456163">
    <property type="gene designation" value="samm50"/>
</dbReference>
<dbReference type="InParanoid" id="Q6P806"/>
<dbReference type="OrthoDB" id="1724197at2759"/>
<dbReference type="Reactome" id="R-XTR-9013404">
    <property type="pathway name" value="RAC2 GTPase cycle"/>
</dbReference>
<dbReference type="Proteomes" id="UP000008143">
    <property type="component" value="Chromosome 3"/>
</dbReference>
<dbReference type="Bgee" id="ENSXETG00000004871">
    <property type="expression patterns" value="Expressed in skeletal muscle tissue and 13 other cell types or tissues"/>
</dbReference>
<dbReference type="GO" id="GO:0005741">
    <property type="term" value="C:mitochondrial outer membrane"/>
    <property type="evidence" value="ECO:0007669"/>
    <property type="project" value="UniProtKB-SubCell"/>
</dbReference>
<dbReference type="GO" id="GO:0042407">
    <property type="term" value="P:cristae formation"/>
    <property type="evidence" value="ECO:0000250"/>
    <property type="project" value="UniProtKB"/>
</dbReference>
<dbReference type="FunFam" id="2.40.160.50:FF:000002">
    <property type="entry name" value="sorting and assembly machinery component 50 homolog"/>
    <property type="match status" value="1"/>
</dbReference>
<dbReference type="FunFam" id="3.10.20.310:FF:000010">
    <property type="entry name" value="sorting and assembly machinery component 50 homolog"/>
    <property type="match status" value="1"/>
</dbReference>
<dbReference type="Gene3D" id="3.10.20.310">
    <property type="entry name" value="membrane protein fhac"/>
    <property type="match status" value="1"/>
</dbReference>
<dbReference type="Gene3D" id="2.40.160.50">
    <property type="entry name" value="membrane protein fhac: a member of the omp85/tpsb transporter family"/>
    <property type="match status" value="1"/>
</dbReference>
<dbReference type="InterPro" id="IPR000184">
    <property type="entry name" value="Bac_surfAg_D15"/>
</dbReference>
<dbReference type="InterPro" id="IPR039910">
    <property type="entry name" value="D15-like"/>
</dbReference>
<dbReference type="InterPro" id="IPR034746">
    <property type="entry name" value="POTRA"/>
</dbReference>
<dbReference type="PANTHER" id="PTHR12815:SF18">
    <property type="entry name" value="SORTING AND ASSEMBLY MACHINERY COMPONENT 50 HOMOLOG"/>
    <property type="match status" value="1"/>
</dbReference>
<dbReference type="PANTHER" id="PTHR12815">
    <property type="entry name" value="SORTING AND ASSEMBLY MACHINERY SAMM50 PROTEIN FAMILY MEMBER"/>
    <property type="match status" value="1"/>
</dbReference>
<dbReference type="Pfam" id="PF01103">
    <property type="entry name" value="Omp85"/>
    <property type="match status" value="1"/>
</dbReference>
<dbReference type="PROSITE" id="PS51779">
    <property type="entry name" value="POTRA"/>
    <property type="match status" value="1"/>
</dbReference>
<proteinExistence type="evidence at transcript level"/>
<evidence type="ECO:0000250" key="1"/>
<evidence type="ECO:0000250" key="2">
    <source>
        <dbReference type="UniProtKB" id="Q9Y512"/>
    </source>
</evidence>
<evidence type="ECO:0000255" key="3">
    <source>
        <dbReference type="PROSITE-ProRule" id="PRU01115"/>
    </source>
</evidence>
<evidence type="ECO:0000256" key="4">
    <source>
        <dbReference type="SAM" id="MobiDB-lite"/>
    </source>
</evidence>
<evidence type="ECO:0000305" key="5"/>
<reference key="1">
    <citation type="submission" date="2003-11" db="EMBL/GenBank/DDBJ databases">
        <authorList>
            <consortium name="NIH - Xenopus Gene Collection (XGC) project"/>
        </authorList>
    </citation>
    <scope>NUCLEOTIDE SEQUENCE [LARGE SCALE MRNA]</scope>
    <source>
        <tissue>Embryo</tissue>
    </source>
</reference>
<keyword id="KW-0472">Membrane</keyword>
<keyword id="KW-0496">Mitochondrion</keyword>
<keyword id="KW-1000">Mitochondrion outer membrane</keyword>
<keyword id="KW-1185">Reference proteome</keyword>
<keyword id="KW-0812">Transmembrane</keyword>
<keyword id="KW-1134">Transmembrane beta strand</keyword>
<sequence>MGTVHARSLDPLPMNGPDFGSHDDADLVEVEPQKKQEILENKDVVVQRVHFEGLGRTKDDLIAHEIGQVFKAKNLIEVMRKSHEAREKLLRLGVFRNVEVLIDTCEGEDALPNGLDVTFEVTELRRLTGSYNTMVGNNEGSMVLGLKLPNLFGRAEKMTFQFSYGTKETSYGLSFFKPQVGNFERNFSVNLYKVTGQFPWSSLRETDRGVSAEINFPIWKTSHTLKWEGVWRELGCLARTASFAIREESGHTLKSSLSHTMVIDSRNTSILPKRGALLKINQELAGYTGGDVSFLKEDFELQLNKQLAWDSVLSTSLWGGMLVPIGDKPSSIADRFYLGGPTSVRGFSMYSIGPQSEGDYLGGEAYWAGGMHLYTPLPFRPGRGGFGDLFRTHFFLNAGNLCNLNYGEGPRAHLRRLAECIRWSYGAGIVLRLGNIARLELNYCIPMGVQSGDRICDGVQFGAGIRFL</sequence>